<keyword id="KW-0961">Cell wall biogenesis/degradation</keyword>
<keyword id="KW-1015">Disulfide bond</keyword>
<keyword id="KW-0325">Glycoprotein</keyword>
<keyword id="KW-0326">Glycosidase</keyword>
<keyword id="KW-0378">Hydrolase</keyword>
<keyword id="KW-0677">Repeat</keyword>
<keyword id="KW-0964">Secreted</keyword>
<keyword id="KW-0732">Signal</keyword>
<keyword id="KW-0865">Zymogen</keyword>
<accession>Q8NK98</accession>
<accession>G7XU37</accession>
<evidence type="ECO:0000250" key="1"/>
<evidence type="ECO:0000255" key="2"/>
<evidence type="ECO:0000255" key="3">
    <source>
        <dbReference type="PROSITE-ProRule" id="PRU10052"/>
    </source>
</evidence>
<evidence type="ECO:0000305" key="4"/>
<protein>
    <recommendedName>
        <fullName>Probable endopolygalacturonase II</fullName>
        <shortName>EPG-II</shortName>
        <ecNumber>3.2.1.15</ecNumber>
    </recommendedName>
    <alternativeName>
        <fullName>Pectinase 2</fullName>
    </alternativeName>
    <alternativeName>
        <fullName>Polygalacturonase II</fullName>
        <shortName>PG-II</shortName>
    </alternativeName>
    <alternativeName>
        <fullName>Polygalacturonase X2</fullName>
    </alternativeName>
</protein>
<gene>
    <name type="primary">pgaII</name>
    <name type="synonym">pg2</name>
    <name type="synonym">pgaB</name>
    <name type="ORF">AKAW_08560</name>
</gene>
<dbReference type="EC" id="3.2.1.15"/>
<dbReference type="EMBL" id="AB080270">
    <property type="protein sequence ID" value="BAC10597.1"/>
    <property type="molecule type" value="Genomic_DNA"/>
</dbReference>
<dbReference type="EMBL" id="DF126473">
    <property type="protein sequence ID" value="GAA90446.1"/>
    <property type="molecule type" value="Genomic_DNA"/>
</dbReference>
<dbReference type="SMR" id="Q8NK98"/>
<dbReference type="FunCoup" id="Q8NK98">
    <property type="interactions" value="140"/>
</dbReference>
<dbReference type="STRING" id="1033177.Q8NK98"/>
<dbReference type="CAZy" id="GH28">
    <property type="family name" value="Glycoside Hydrolase Family 28"/>
</dbReference>
<dbReference type="GlyCosmos" id="Q8NK98">
    <property type="glycosylation" value="1 site, No reported glycans"/>
</dbReference>
<dbReference type="VEuPathDB" id="FungiDB:AKAW_08560"/>
<dbReference type="InParanoid" id="Q8NK98"/>
<dbReference type="OrthoDB" id="96161at5052"/>
<dbReference type="GO" id="GO:0005576">
    <property type="term" value="C:extracellular region"/>
    <property type="evidence" value="ECO:0000250"/>
    <property type="project" value="UniProtKB"/>
</dbReference>
<dbReference type="GO" id="GO:0004650">
    <property type="term" value="F:polygalacturonase activity"/>
    <property type="evidence" value="ECO:0000250"/>
    <property type="project" value="UniProtKB"/>
</dbReference>
<dbReference type="GO" id="GO:0071555">
    <property type="term" value="P:cell wall organization"/>
    <property type="evidence" value="ECO:0007669"/>
    <property type="project" value="UniProtKB-KW"/>
</dbReference>
<dbReference type="GO" id="GO:0045490">
    <property type="term" value="P:pectin catabolic process"/>
    <property type="evidence" value="ECO:0000250"/>
    <property type="project" value="UniProtKB"/>
</dbReference>
<dbReference type="FunFam" id="2.160.20.10:FF:000002">
    <property type="entry name" value="Endopolygalacturonase D"/>
    <property type="match status" value="1"/>
</dbReference>
<dbReference type="Gene3D" id="2.160.20.10">
    <property type="entry name" value="Single-stranded right-handed beta-helix, Pectin lyase-like"/>
    <property type="match status" value="1"/>
</dbReference>
<dbReference type="InterPro" id="IPR000743">
    <property type="entry name" value="Glyco_hydro_28"/>
</dbReference>
<dbReference type="InterPro" id="IPR050434">
    <property type="entry name" value="Glycosyl_hydrlase_28"/>
</dbReference>
<dbReference type="InterPro" id="IPR006626">
    <property type="entry name" value="PbH1"/>
</dbReference>
<dbReference type="InterPro" id="IPR012334">
    <property type="entry name" value="Pectin_lyas_fold"/>
</dbReference>
<dbReference type="InterPro" id="IPR011050">
    <property type="entry name" value="Pectin_lyase_fold/virulence"/>
</dbReference>
<dbReference type="PANTHER" id="PTHR31884:SF13">
    <property type="entry name" value="ENDOPOLYGALACTURONASE B"/>
    <property type="match status" value="1"/>
</dbReference>
<dbReference type="PANTHER" id="PTHR31884">
    <property type="entry name" value="POLYGALACTURONASE"/>
    <property type="match status" value="1"/>
</dbReference>
<dbReference type="Pfam" id="PF00295">
    <property type="entry name" value="Glyco_hydro_28"/>
    <property type="match status" value="1"/>
</dbReference>
<dbReference type="SMART" id="SM00710">
    <property type="entry name" value="PbH1"/>
    <property type="match status" value="5"/>
</dbReference>
<dbReference type="SUPFAM" id="SSF51126">
    <property type="entry name" value="Pectin lyase-like"/>
    <property type="match status" value="1"/>
</dbReference>
<dbReference type="PROSITE" id="PS00502">
    <property type="entry name" value="POLYGALACTURONASE"/>
    <property type="match status" value="1"/>
</dbReference>
<organism>
    <name type="scientific">Aspergillus kawachii (strain NBRC 4308)</name>
    <name type="common">White koji mold</name>
    <name type="synonym">Aspergillus awamori var. kawachi</name>
    <dbReference type="NCBI Taxonomy" id="1033177"/>
    <lineage>
        <taxon>Eukaryota</taxon>
        <taxon>Fungi</taxon>
        <taxon>Dikarya</taxon>
        <taxon>Ascomycota</taxon>
        <taxon>Pezizomycotina</taxon>
        <taxon>Eurotiomycetes</taxon>
        <taxon>Eurotiomycetidae</taxon>
        <taxon>Eurotiales</taxon>
        <taxon>Aspergillaceae</taxon>
        <taxon>Aspergillus</taxon>
        <taxon>Aspergillus subgen. Circumdati</taxon>
    </lineage>
</organism>
<reference key="1">
    <citation type="submission" date="2002-02" db="EMBL/GenBank/DDBJ databases">
        <title>Purification and properties of PgaA and PgaB.</title>
        <authorList>
            <person name="Mikami S."/>
        </authorList>
    </citation>
    <scope>NUCLEOTIDE SEQUENCE [GENOMIC DNA]</scope>
    <source>
        <strain>NBRC 4308</strain>
    </source>
</reference>
<reference key="2">
    <citation type="journal article" date="2011" name="Eukaryot. Cell">
        <title>Genome sequence of the white koji mold Aspergillus kawachii IFO 4308, used for brewing the Japanese distilled spirit shochu.</title>
        <authorList>
            <person name="Futagami T."/>
            <person name="Mori K."/>
            <person name="Yamashita A."/>
            <person name="Wada S."/>
            <person name="Kajiwara Y."/>
            <person name="Takashita H."/>
            <person name="Omori T."/>
            <person name="Takegawa K."/>
            <person name="Tashiro K."/>
            <person name="Kuhara S."/>
            <person name="Goto M."/>
        </authorList>
    </citation>
    <scope>NUCLEOTIDE SEQUENCE [LARGE SCALE GENOMIC DNA]</scope>
    <source>
        <strain>NBRC 4308</strain>
    </source>
</reference>
<name>PGLR2_ASPKW</name>
<sequence length="362" mass="37604">MHSFASLLAYGLAAGATLASASPIEARDSCTFTTAAAAKAGKAKCSTITLDSIKVPAGTTLDLTGLTSGTKVIFEGTTTFDYEEWAGPLISMSGKDITVTGASGHLINCDGSRWWDGKGTSGKKKPKFFYAHGLDSSSITGLNIKNTPLMAFSVESDDITLTDITINNADGDSLGGHNTDAFDVGNSVGVNIIKPWVHNQDDCLAINSGENIWFTGGTCIGGHGLSIGSVGDRSNNVVKNVTIEHSTVSNSENAVRIKTISGATGSVSEITYSNIVMSGISDYGVVIQQDYEDGKPTGKPTNGVTITDVKLESVTGTVDSKATDIYLLCGSGSCSDWTWDDVKVTGGKKSSACKNYPSVASC</sequence>
<feature type="signal peptide" evidence="2">
    <location>
        <begin position="1"/>
        <end position="20"/>
    </location>
</feature>
<feature type="propeptide" id="PRO_0000393630" evidence="2">
    <location>
        <begin position="21"/>
        <end position="27"/>
    </location>
</feature>
<feature type="chain" id="PRO_0000393631" description="Probable endopolygalacturonase II">
    <location>
        <begin position="28"/>
        <end position="362"/>
    </location>
</feature>
<feature type="repeat" description="PbH1 1">
    <location>
        <begin position="156"/>
        <end position="186"/>
    </location>
</feature>
<feature type="repeat" description="PbH1 2">
    <location>
        <begin position="209"/>
        <end position="229"/>
    </location>
</feature>
<feature type="repeat" description="PbH1 3">
    <location>
        <begin position="238"/>
        <end position="259"/>
    </location>
</feature>
<feature type="repeat" description="PbH1 4">
    <location>
        <begin position="267"/>
        <end position="289"/>
    </location>
</feature>
<feature type="repeat" description="PbH1 5">
    <location>
        <begin position="301"/>
        <end position="322"/>
    </location>
</feature>
<feature type="active site" description="Proton donor" evidence="3">
    <location>
        <position position="201"/>
    </location>
</feature>
<feature type="active site" evidence="3">
    <location>
        <position position="223"/>
    </location>
</feature>
<feature type="glycosylation site" description="N-linked (GlcNAc...) asparagine" evidence="2">
    <location>
        <position position="240"/>
    </location>
</feature>
<feature type="disulfide bond" evidence="1">
    <location>
        <begin position="30"/>
        <end position="45"/>
    </location>
</feature>
<feature type="disulfide bond" evidence="1">
    <location>
        <begin position="203"/>
        <end position="219"/>
    </location>
</feature>
<feature type="disulfide bond" evidence="1">
    <location>
        <begin position="329"/>
        <end position="334"/>
    </location>
</feature>
<feature type="disulfide bond" evidence="1">
    <location>
        <begin position="353"/>
        <end position="362"/>
    </location>
</feature>
<feature type="sequence conflict" description="In Ref. 1; BAC10597." evidence="4" ref="1">
    <original>K</original>
    <variation>T</variation>
    <location>
        <position position="127"/>
    </location>
</feature>
<comment type="function">
    <text evidence="1">Involved in maceration and soft-rotting of plant tissue. Hydrolyzes the 1,4-alpha glycosidic bonds of de-esterified pectate in the smooth region of the plant cell wall (By similarity).</text>
</comment>
<comment type="catalytic activity">
    <reaction>
        <text>(1,4-alpha-D-galacturonosyl)n+m + H2O = (1,4-alpha-D-galacturonosyl)n + (1,4-alpha-D-galacturonosyl)m.</text>
        <dbReference type="EC" id="3.2.1.15"/>
    </reaction>
</comment>
<comment type="subcellular location">
    <subcellularLocation>
        <location evidence="1">Secreted</location>
    </subcellularLocation>
</comment>
<comment type="similarity">
    <text evidence="4">Belongs to the glycosyl hydrolase 28 family.</text>
</comment>
<proteinExistence type="inferred from homology"/>